<gene>
    <name type="primary">cdc5l</name>
    <name type="ORF">DDB_G0279311</name>
</gene>
<organism>
    <name type="scientific">Dictyostelium discoideum</name>
    <name type="common">Social amoeba</name>
    <dbReference type="NCBI Taxonomy" id="44689"/>
    <lineage>
        <taxon>Eukaryota</taxon>
        <taxon>Amoebozoa</taxon>
        <taxon>Evosea</taxon>
        <taxon>Eumycetozoa</taxon>
        <taxon>Dictyostelia</taxon>
        <taxon>Dictyosteliales</taxon>
        <taxon>Dictyosteliaceae</taxon>
        <taxon>Dictyostelium</taxon>
    </lineage>
</organism>
<sequence length="800" mass="92121">MRNVKGGVWKNTEDEILKVAIMKYGLNQWARISSLLTRKSPAQCKARWHEWLDPSIKKTEWSKEEEEKLLHLAKIFPSQWKTIAPLVGRTASQCLERYNRLLDEVQRQQDNENGGGSGGGGTTTTTTTTTGENDPRRLRMGDIDPTPETKPAKPDPIDMDEDEKETLSEAKARLSNTQGKKEKRKFREKQLEEARRLAFLQKKRELKAAGINYNPKKKGKEKSWDISKEIPFYLKPKAGFYDVPDEELRDEPNKDASFIGKRVDQIENPNYLQRQEKLNKLEDIKKSKKEIFNLPQLISETSKSNDVEHSIKRTKLQLPEPQLTDDDIQEISDYEKLNGSGSGGGSGGVGVGEFPLPAPRTASISSTAANNNTNNIRTPMKQDTIMSEAQNLLALSNAQTPLKGGAGPNVSQTPLPKSVNNSTPFRTPNPLANQTPTQHNKKQSLNDSNEFAIEDKFKRQQGKNQLLSNLKNLPSPTIEYKLELPSELPTIEDDTTLELDNSEIHIREQQQLKHKEQFKLRNRSTVLKRNLPRSRNLFPINKNNNNNNNNNINQDELRILKEINRIISHDNKTFPNDSITPSSTFDDDDDDDNHHHHHDDIDNNSINDNDEKYENYDYFTNTELEFADKLIRDEIEQIKQELKQPLPSSNEILEEIDQIRSQFIYLPKENQFIEKSNANQTQLIENLQFEYDKTLNKIKNSSMKSVNLEKKLNIYNGGYQNRSNTIIKNIDDMFDQLEQSEIEYQCFVALKNNESIQMEKRLKSIENQVYDQCEIESRLQQKYAQLLNEKNLLKKKLSIF</sequence>
<comment type="function">
    <text evidence="1">DNA-binding protein involved in cell cycle control. May act as a transcription activator. Plays a role in pre-mRNA splicing as core component of precatalytic, catalytic and postcatalytic spliceosomal complexes. May also play a role in the response to DNA damage (DDR).</text>
</comment>
<comment type="subunit">
    <text evidence="1">Component of the precatalytic, catalytic and postcatalytic spliceosome complexes.</text>
</comment>
<comment type="subcellular location">
    <subcellularLocation>
        <location evidence="3">Nucleus</location>
    </subcellularLocation>
    <subcellularLocation>
        <location evidence="1">Cytoplasm</location>
    </subcellularLocation>
    <text evidence="1">May shuttle between cytoplasm and nucleus.</text>
</comment>
<comment type="similarity">
    <text evidence="5">Belongs to the CEF1 family.</text>
</comment>
<name>CDC5L_DICDI</name>
<feature type="chain" id="PRO_0000342369" description="Cell division cycle 5-like protein">
    <location>
        <begin position="1"/>
        <end position="800"/>
    </location>
</feature>
<feature type="domain" description="HTH myb-type 1" evidence="3">
    <location>
        <begin position="1"/>
        <end position="56"/>
    </location>
</feature>
<feature type="domain" description="HTH myb-type 2" evidence="3">
    <location>
        <begin position="57"/>
        <end position="106"/>
    </location>
</feature>
<feature type="DNA-binding region" description="H-T-H motif" evidence="3">
    <location>
        <begin position="29"/>
        <end position="52"/>
    </location>
</feature>
<feature type="DNA-binding region" description="H-T-H motif" evidence="3">
    <location>
        <begin position="80"/>
        <end position="102"/>
    </location>
</feature>
<feature type="region of interest" description="Disordered" evidence="4">
    <location>
        <begin position="109"/>
        <end position="186"/>
    </location>
</feature>
<feature type="region of interest" description="Disordered" evidence="4">
    <location>
        <begin position="334"/>
        <end position="378"/>
    </location>
</feature>
<feature type="region of interest" description="Disordered" evidence="4">
    <location>
        <begin position="399"/>
        <end position="445"/>
    </location>
</feature>
<feature type="region of interest" description="Disordered" evidence="4">
    <location>
        <begin position="571"/>
        <end position="610"/>
    </location>
</feature>
<feature type="coiled-coil region" evidence="2">
    <location>
        <begin position="621"/>
        <end position="700"/>
    </location>
</feature>
<feature type="coiled-coil region" evidence="2">
    <location>
        <begin position="748"/>
        <end position="800"/>
    </location>
</feature>
<feature type="compositionally biased region" description="Gly residues" evidence="4">
    <location>
        <begin position="113"/>
        <end position="122"/>
    </location>
</feature>
<feature type="compositionally biased region" description="Basic and acidic residues" evidence="4">
    <location>
        <begin position="133"/>
        <end position="142"/>
    </location>
</feature>
<feature type="compositionally biased region" description="Gly residues" evidence="4">
    <location>
        <begin position="340"/>
        <end position="351"/>
    </location>
</feature>
<feature type="compositionally biased region" description="Low complexity" evidence="4">
    <location>
        <begin position="361"/>
        <end position="376"/>
    </location>
</feature>
<feature type="compositionally biased region" description="Polar residues" evidence="4">
    <location>
        <begin position="409"/>
        <end position="445"/>
    </location>
</feature>
<feature type="compositionally biased region" description="Polar residues" evidence="4">
    <location>
        <begin position="573"/>
        <end position="584"/>
    </location>
</feature>
<feature type="compositionally biased region" description="Basic and acidic residues" evidence="4">
    <location>
        <begin position="592"/>
        <end position="601"/>
    </location>
</feature>
<dbReference type="EMBL" id="AAFI02000030">
    <property type="protein sequence ID" value="EAL67804.1"/>
    <property type="molecule type" value="Genomic_DNA"/>
</dbReference>
<dbReference type="RefSeq" id="XP_641787.1">
    <property type="nucleotide sequence ID" value="XM_636695.1"/>
</dbReference>
<dbReference type="SMR" id="Q54WZ0"/>
<dbReference type="FunCoup" id="Q54WZ0">
    <property type="interactions" value="1093"/>
</dbReference>
<dbReference type="STRING" id="44689.Q54WZ0"/>
<dbReference type="GlyGen" id="Q54WZ0">
    <property type="glycosylation" value="1 site"/>
</dbReference>
<dbReference type="PaxDb" id="44689-DDB0220620"/>
<dbReference type="EnsemblProtists" id="EAL67804">
    <property type="protein sequence ID" value="EAL67804"/>
    <property type="gene ID" value="DDB_G0279311"/>
</dbReference>
<dbReference type="GeneID" id="8621984"/>
<dbReference type="KEGG" id="ddi:DDB_G0279311"/>
<dbReference type="dictyBase" id="DDB_G0279311">
    <property type="gene designation" value="cdc5l"/>
</dbReference>
<dbReference type="VEuPathDB" id="AmoebaDB:DDB_G0279311"/>
<dbReference type="eggNOG" id="KOG0050">
    <property type="taxonomic scope" value="Eukaryota"/>
</dbReference>
<dbReference type="HOGENOM" id="CLU_009082_0_0_1"/>
<dbReference type="InParanoid" id="Q54WZ0"/>
<dbReference type="OMA" id="KMGMAGE"/>
<dbReference type="PhylomeDB" id="Q54WZ0"/>
<dbReference type="Reactome" id="R-DDI-72163">
    <property type="pathway name" value="mRNA Splicing - Major Pathway"/>
</dbReference>
<dbReference type="PRO" id="PR:Q54WZ0"/>
<dbReference type="Proteomes" id="UP000002195">
    <property type="component" value="Chromosome 3"/>
</dbReference>
<dbReference type="GO" id="GO:0005737">
    <property type="term" value="C:cytoplasm"/>
    <property type="evidence" value="ECO:0007669"/>
    <property type="project" value="UniProtKB-SubCell"/>
</dbReference>
<dbReference type="GO" id="GO:0005634">
    <property type="term" value="C:nucleus"/>
    <property type="evidence" value="ECO:0000250"/>
    <property type="project" value="dictyBase"/>
</dbReference>
<dbReference type="GO" id="GO:0000974">
    <property type="term" value="C:Prp19 complex"/>
    <property type="evidence" value="ECO:0000318"/>
    <property type="project" value="GO_Central"/>
</dbReference>
<dbReference type="GO" id="GO:0005681">
    <property type="term" value="C:spliceosomal complex"/>
    <property type="evidence" value="ECO:0000318"/>
    <property type="project" value="GO_Central"/>
</dbReference>
<dbReference type="GO" id="GO:0003677">
    <property type="term" value="F:DNA binding"/>
    <property type="evidence" value="ECO:0007669"/>
    <property type="project" value="UniProtKB-KW"/>
</dbReference>
<dbReference type="GO" id="GO:0003723">
    <property type="term" value="F:RNA binding"/>
    <property type="evidence" value="ECO:0007669"/>
    <property type="project" value="UniProtKB-KW"/>
</dbReference>
<dbReference type="GO" id="GO:0006281">
    <property type="term" value="P:DNA repair"/>
    <property type="evidence" value="ECO:0007669"/>
    <property type="project" value="UniProtKB-KW"/>
</dbReference>
<dbReference type="GO" id="GO:0000398">
    <property type="term" value="P:mRNA splicing, via spliceosome"/>
    <property type="evidence" value="ECO:0000318"/>
    <property type="project" value="GO_Central"/>
</dbReference>
<dbReference type="CDD" id="cd00167">
    <property type="entry name" value="SANT"/>
    <property type="match status" value="1"/>
</dbReference>
<dbReference type="CDD" id="cd11659">
    <property type="entry name" value="SANT_CDC5_II"/>
    <property type="match status" value="1"/>
</dbReference>
<dbReference type="FunFam" id="1.10.10.60:FF:000021">
    <property type="entry name" value="CDC5 cell division cycle 5-like"/>
    <property type="match status" value="1"/>
</dbReference>
<dbReference type="Gene3D" id="1.10.10.60">
    <property type="entry name" value="Homeodomain-like"/>
    <property type="match status" value="2"/>
</dbReference>
<dbReference type="InterPro" id="IPR047242">
    <property type="entry name" value="CDC5L/Cef1"/>
</dbReference>
<dbReference type="InterPro" id="IPR021786">
    <property type="entry name" value="Cdc5p/Cef1_C"/>
</dbReference>
<dbReference type="InterPro" id="IPR009057">
    <property type="entry name" value="Homeodomain-like_sf"/>
</dbReference>
<dbReference type="InterPro" id="IPR017930">
    <property type="entry name" value="Myb_dom"/>
</dbReference>
<dbReference type="InterPro" id="IPR001005">
    <property type="entry name" value="SANT/Myb"/>
</dbReference>
<dbReference type="InterPro" id="IPR047240">
    <property type="entry name" value="SANT_CDC5L_II"/>
</dbReference>
<dbReference type="PANTHER" id="PTHR45885">
    <property type="entry name" value="CELL DIVISION CYCLE 5-LIKE PROTEIN"/>
    <property type="match status" value="1"/>
</dbReference>
<dbReference type="PANTHER" id="PTHR45885:SF1">
    <property type="entry name" value="CELL DIVISION CYCLE 5-LIKE PROTEIN"/>
    <property type="match status" value="1"/>
</dbReference>
<dbReference type="Pfam" id="PF11831">
    <property type="entry name" value="Myb_Cef"/>
    <property type="match status" value="1"/>
</dbReference>
<dbReference type="Pfam" id="PF13921">
    <property type="entry name" value="Myb_DNA-bind_6"/>
    <property type="match status" value="1"/>
</dbReference>
<dbReference type="SMART" id="SM00717">
    <property type="entry name" value="SANT"/>
    <property type="match status" value="2"/>
</dbReference>
<dbReference type="SUPFAM" id="SSF46689">
    <property type="entry name" value="Homeodomain-like"/>
    <property type="match status" value="2"/>
</dbReference>
<dbReference type="PROSITE" id="PS51294">
    <property type="entry name" value="HTH_MYB"/>
    <property type="match status" value="2"/>
</dbReference>
<reference key="1">
    <citation type="journal article" date="2005" name="Nature">
        <title>The genome of the social amoeba Dictyostelium discoideum.</title>
        <authorList>
            <person name="Eichinger L."/>
            <person name="Pachebat J.A."/>
            <person name="Gloeckner G."/>
            <person name="Rajandream M.A."/>
            <person name="Sucgang R."/>
            <person name="Berriman M."/>
            <person name="Song J."/>
            <person name="Olsen R."/>
            <person name="Szafranski K."/>
            <person name="Xu Q."/>
            <person name="Tunggal B."/>
            <person name="Kummerfeld S."/>
            <person name="Madera M."/>
            <person name="Konfortov B.A."/>
            <person name="Rivero F."/>
            <person name="Bankier A.T."/>
            <person name="Lehmann R."/>
            <person name="Hamlin N."/>
            <person name="Davies R."/>
            <person name="Gaudet P."/>
            <person name="Fey P."/>
            <person name="Pilcher K."/>
            <person name="Chen G."/>
            <person name="Saunders D."/>
            <person name="Sodergren E.J."/>
            <person name="Davis P."/>
            <person name="Kerhornou A."/>
            <person name="Nie X."/>
            <person name="Hall N."/>
            <person name="Anjard C."/>
            <person name="Hemphill L."/>
            <person name="Bason N."/>
            <person name="Farbrother P."/>
            <person name="Desany B."/>
            <person name="Just E."/>
            <person name="Morio T."/>
            <person name="Rost R."/>
            <person name="Churcher C.M."/>
            <person name="Cooper J."/>
            <person name="Haydock S."/>
            <person name="van Driessche N."/>
            <person name="Cronin A."/>
            <person name="Goodhead I."/>
            <person name="Muzny D.M."/>
            <person name="Mourier T."/>
            <person name="Pain A."/>
            <person name="Lu M."/>
            <person name="Harper D."/>
            <person name="Lindsay R."/>
            <person name="Hauser H."/>
            <person name="James K.D."/>
            <person name="Quiles M."/>
            <person name="Madan Babu M."/>
            <person name="Saito T."/>
            <person name="Buchrieser C."/>
            <person name="Wardroper A."/>
            <person name="Felder M."/>
            <person name="Thangavelu M."/>
            <person name="Johnson D."/>
            <person name="Knights A."/>
            <person name="Loulseged H."/>
            <person name="Mungall K.L."/>
            <person name="Oliver K."/>
            <person name="Price C."/>
            <person name="Quail M.A."/>
            <person name="Urushihara H."/>
            <person name="Hernandez J."/>
            <person name="Rabbinowitsch E."/>
            <person name="Steffen D."/>
            <person name="Sanders M."/>
            <person name="Ma J."/>
            <person name="Kohara Y."/>
            <person name="Sharp S."/>
            <person name="Simmonds M.N."/>
            <person name="Spiegler S."/>
            <person name="Tivey A."/>
            <person name="Sugano S."/>
            <person name="White B."/>
            <person name="Walker D."/>
            <person name="Woodward J.R."/>
            <person name="Winckler T."/>
            <person name="Tanaka Y."/>
            <person name="Shaulsky G."/>
            <person name="Schleicher M."/>
            <person name="Weinstock G.M."/>
            <person name="Rosenthal A."/>
            <person name="Cox E.C."/>
            <person name="Chisholm R.L."/>
            <person name="Gibbs R.A."/>
            <person name="Loomis W.F."/>
            <person name="Platzer M."/>
            <person name="Kay R.R."/>
            <person name="Williams J.G."/>
            <person name="Dear P.H."/>
            <person name="Noegel A.A."/>
            <person name="Barrell B.G."/>
            <person name="Kuspa A."/>
        </authorList>
    </citation>
    <scope>NUCLEOTIDE SEQUENCE [LARGE SCALE GENOMIC DNA]</scope>
    <source>
        <strain>AX4</strain>
    </source>
</reference>
<keyword id="KW-0131">Cell cycle</keyword>
<keyword id="KW-0175">Coiled coil</keyword>
<keyword id="KW-0963">Cytoplasm</keyword>
<keyword id="KW-0227">DNA damage</keyword>
<keyword id="KW-0234">DNA repair</keyword>
<keyword id="KW-0238">DNA-binding</keyword>
<keyword id="KW-0507">mRNA processing</keyword>
<keyword id="KW-0508">mRNA splicing</keyword>
<keyword id="KW-0539">Nucleus</keyword>
<keyword id="KW-1185">Reference proteome</keyword>
<keyword id="KW-0677">Repeat</keyword>
<keyword id="KW-0694">RNA-binding</keyword>
<keyword id="KW-0747">Spliceosome</keyword>
<accession>Q54WZ0</accession>
<evidence type="ECO:0000250" key="1">
    <source>
        <dbReference type="UniProtKB" id="Q99459"/>
    </source>
</evidence>
<evidence type="ECO:0000255" key="2"/>
<evidence type="ECO:0000255" key="3">
    <source>
        <dbReference type="PROSITE-ProRule" id="PRU00625"/>
    </source>
</evidence>
<evidence type="ECO:0000256" key="4">
    <source>
        <dbReference type="SAM" id="MobiDB-lite"/>
    </source>
</evidence>
<evidence type="ECO:0000305" key="5"/>
<proteinExistence type="inferred from homology"/>
<protein>
    <recommendedName>
        <fullName>Cell division cycle 5-like protein</fullName>
    </recommendedName>
    <alternativeName>
        <fullName>Cdc5-like protein</fullName>
    </alternativeName>
</protein>